<dbReference type="EMBL" id="CP000885">
    <property type="protein sequence ID" value="ABX43157.1"/>
    <property type="molecule type" value="Genomic_DNA"/>
</dbReference>
<dbReference type="RefSeq" id="WP_012200808.1">
    <property type="nucleotide sequence ID" value="NC_010001.1"/>
</dbReference>
<dbReference type="SMR" id="A9KNY7"/>
<dbReference type="STRING" id="357809.Cphy_2797"/>
<dbReference type="KEGG" id="cpy:Cphy_2797"/>
<dbReference type="eggNOG" id="COG2848">
    <property type="taxonomic scope" value="Bacteria"/>
</dbReference>
<dbReference type="HOGENOM" id="CLU_048704_0_0_9"/>
<dbReference type="OrthoDB" id="9763001at2"/>
<dbReference type="Proteomes" id="UP000000370">
    <property type="component" value="Chromosome"/>
</dbReference>
<dbReference type="CDD" id="cd08025">
    <property type="entry name" value="RNR_PFL_like_DUF711"/>
    <property type="match status" value="1"/>
</dbReference>
<dbReference type="Gene3D" id="3.20.70.20">
    <property type="match status" value="1"/>
</dbReference>
<dbReference type="HAMAP" id="MF_01221">
    <property type="entry name" value="UPF0210"/>
    <property type="match status" value="1"/>
</dbReference>
<dbReference type="InterPro" id="IPR007841">
    <property type="entry name" value="UPF0210"/>
</dbReference>
<dbReference type="NCBIfam" id="NF003700">
    <property type="entry name" value="PRK05313.1"/>
    <property type="match status" value="1"/>
</dbReference>
<dbReference type="PANTHER" id="PTHR37560:SF1">
    <property type="entry name" value="UPF0210 PROTEIN MJ1665"/>
    <property type="match status" value="1"/>
</dbReference>
<dbReference type="PANTHER" id="PTHR37560">
    <property type="entry name" value="UPF0210 PROTEIN SPR0218"/>
    <property type="match status" value="1"/>
</dbReference>
<dbReference type="Pfam" id="PF05167">
    <property type="entry name" value="DUF711"/>
    <property type="match status" value="1"/>
</dbReference>
<dbReference type="SUPFAM" id="SSF51998">
    <property type="entry name" value="PFL-like glycyl radical enzymes"/>
    <property type="match status" value="1"/>
</dbReference>
<organism>
    <name type="scientific">Lachnoclostridium phytofermentans (strain ATCC 700394 / DSM 18823 / ISDg)</name>
    <name type="common">Clostridium phytofermentans</name>
    <dbReference type="NCBI Taxonomy" id="357809"/>
    <lineage>
        <taxon>Bacteria</taxon>
        <taxon>Bacillati</taxon>
        <taxon>Bacillota</taxon>
        <taxon>Clostridia</taxon>
        <taxon>Lachnospirales</taxon>
        <taxon>Lachnospiraceae</taxon>
    </lineage>
</organism>
<feature type="chain" id="PRO_1000085662" description="UPF0210 protein Cphy_2797">
    <location>
        <begin position="1"/>
        <end position="454"/>
    </location>
</feature>
<protein>
    <recommendedName>
        <fullName evidence="1">UPF0210 protein Cphy_2797</fullName>
    </recommendedName>
</protein>
<reference key="1">
    <citation type="submission" date="2007-11" db="EMBL/GenBank/DDBJ databases">
        <title>Complete genome sequence of Clostridium phytofermentans ISDg.</title>
        <authorList>
            <person name="Leschine S.B."/>
            <person name="Warnick T.A."/>
            <person name="Blanchard J.L."/>
            <person name="Schnell D.J."/>
            <person name="Petit E.L."/>
            <person name="LaTouf W.G."/>
            <person name="Copeland A."/>
            <person name="Lucas S."/>
            <person name="Lapidus A."/>
            <person name="Barry K."/>
            <person name="Glavina del Rio T."/>
            <person name="Dalin E."/>
            <person name="Tice H."/>
            <person name="Pitluck S."/>
            <person name="Kiss H."/>
            <person name="Brettin T."/>
            <person name="Bruce D."/>
            <person name="Detter J.C."/>
            <person name="Han C."/>
            <person name="Kuske C."/>
            <person name="Schmutz J."/>
            <person name="Larimer F."/>
            <person name="Land M."/>
            <person name="Hauser L."/>
            <person name="Kyrpides N."/>
            <person name="Kim E.A."/>
            <person name="Richardson P."/>
        </authorList>
    </citation>
    <scope>NUCLEOTIDE SEQUENCE [LARGE SCALE GENOMIC DNA]</scope>
    <source>
        <strain>ATCC 700394 / DSM 18823 / ISDg</strain>
    </source>
</reference>
<keyword id="KW-1185">Reference proteome</keyword>
<name>Y2797_LACP7</name>
<evidence type="ECO:0000255" key="1">
    <source>
        <dbReference type="HAMAP-Rule" id="MF_01221"/>
    </source>
</evidence>
<sequence length="454" mass="47749">MINFNEVLETNKMIEQENLDVRTITLGISLLDCISSNLEELNQNIYDKITTVAKDLVTTGKKIERQFGIPVVNKRISVTPIAMIGASACKTPSDFVTIAKTLDRAANTVGVNFIGGYSALVSKGMTSSERLLIESIPEALAVTERVCSSVNVGSTKTGINMDAVKLLGQIMLDTAEYTKEKDSLGCAKLVIFCNAPDDNPFMAGAFHGVTEADAIINVGVSGPGVVKTALESVRGEDFGTLCETIKKTAFKITRVGQLVAMEASKMLNIPFGIVDLSLAPTPAVGDSVAEILQEIGLEYPGAPGTTAALALLNDSVKKGGVMASSYVGGLSGAFIPVSEDQGMIDAVRAGCLTLEKLEAMTCVCSVGLDMIAIPGDTKATTISGIIADEMAIGMINQKTTAVRLIPVIGKKVGDIAEFGGLLGYAPIMPVNNFSCDNFVNRGGRIPAPIHSFKN</sequence>
<comment type="subunit">
    <text evidence="1">Homodimer.</text>
</comment>
<comment type="similarity">
    <text evidence="1">Belongs to the UPF0210 family.</text>
</comment>
<proteinExistence type="inferred from homology"/>
<accession>A9KNY7</accession>
<gene>
    <name type="ordered locus">Cphy_2797</name>
</gene>